<reference key="1">
    <citation type="journal article" date="2007" name="J. Bacteriol.">
        <title>The complete genome sequence of Roseobacter denitrificans reveals a mixotrophic rather than photosynthetic metabolism.</title>
        <authorList>
            <person name="Swingley W.D."/>
            <person name="Sadekar S."/>
            <person name="Mastrian S.D."/>
            <person name="Matthies H.J."/>
            <person name="Hao J."/>
            <person name="Ramos H."/>
            <person name="Acharya C.R."/>
            <person name="Conrad A.L."/>
            <person name="Taylor H.L."/>
            <person name="Dejesa L.C."/>
            <person name="Shah M.K."/>
            <person name="O'Huallachain M.E."/>
            <person name="Lince M.T."/>
            <person name="Blankenship R.E."/>
            <person name="Beatty J.T."/>
            <person name="Touchman J.W."/>
        </authorList>
    </citation>
    <scope>NUCLEOTIDE SEQUENCE [LARGE SCALE GENOMIC DNA]</scope>
    <source>
        <strain>ATCC 33942 / OCh 114</strain>
    </source>
</reference>
<sequence length="260" mass="28033">MALPEFSMRQLLEAGVHFGHQTQRWNPRMGPFIYGARNGIHIMDLTQTVPMLDQALQAIRDTVAKGGSILFVGTKRQAQQPIADAAEKCAQYYMNHRWLGGTLTNWQTVSQSINRLKAIDEQSERGFEGLTKKERLGMERDQGKLQASLGGIREMGGRPDLIFVIDVKKEALAVAEANKLGIPVVAVVDTNCAPDGIDYIIPGNDDASRAISLYCDLAARAALDGMSAQLGAAGVDLGAMEEAPVEEAVAAEAPAEEAQA</sequence>
<gene>
    <name evidence="1" type="primary">rpsB</name>
    <name type="ordered locus">RD1_2653</name>
</gene>
<keyword id="KW-1185">Reference proteome</keyword>
<keyword id="KW-0687">Ribonucleoprotein</keyword>
<keyword id="KW-0689">Ribosomal protein</keyword>
<accession>Q165Z3</accession>
<evidence type="ECO:0000255" key="1">
    <source>
        <dbReference type="HAMAP-Rule" id="MF_00291"/>
    </source>
</evidence>
<evidence type="ECO:0000305" key="2"/>
<dbReference type="EMBL" id="CP000362">
    <property type="protein sequence ID" value="ABG32200.1"/>
    <property type="molecule type" value="Genomic_DNA"/>
</dbReference>
<dbReference type="RefSeq" id="WP_011568817.1">
    <property type="nucleotide sequence ID" value="NC_008209.1"/>
</dbReference>
<dbReference type="SMR" id="Q165Z3"/>
<dbReference type="STRING" id="375451.RD1_2653"/>
<dbReference type="KEGG" id="rde:RD1_2653"/>
<dbReference type="eggNOG" id="COG0052">
    <property type="taxonomic scope" value="Bacteria"/>
</dbReference>
<dbReference type="HOGENOM" id="CLU_040318_2_1_5"/>
<dbReference type="OrthoDB" id="9808036at2"/>
<dbReference type="Proteomes" id="UP000007029">
    <property type="component" value="Chromosome"/>
</dbReference>
<dbReference type="GO" id="GO:0022627">
    <property type="term" value="C:cytosolic small ribosomal subunit"/>
    <property type="evidence" value="ECO:0007669"/>
    <property type="project" value="TreeGrafter"/>
</dbReference>
<dbReference type="GO" id="GO:0003735">
    <property type="term" value="F:structural constituent of ribosome"/>
    <property type="evidence" value="ECO:0007669"/>
    <property type="project" value="InterPro"/>
</dbReference>
<dbReference type="GO" id="GO:0006412">
    <property type="term" value="P:translation"/>
    <property type="evidence" value="ECO:0007669"/>
    <property type="project" value="UniProtKB-UniRule"/>
</dbReference>
<dbReference type="CDD" id="cd01425">
    <property type="entry name" value="RPS2"/>
    <property type="match status" value="1"/>
</dbReference>
<dbReference type="FunFam" id="1.10.287.610:FF:000001">
    <property type="entry name" value="30S ribosomal protein S2"/>
    <property type="match status" value="1"/>
</dbReference>
<dbReference type="Gene3D" id="3.40.50.10490">
    <property type="entry name" value="Glucose-6-phosphate isomerase like protein, domain 1"/>
    <property type="match status" value="1"/>
</dbReference>
<dbReference type="Gene3D" id="1.10.287.610">
    <property type="entry name" value="Helix hairpin bin"/>
    <property type="match status" value="1"/>
</dbReference>
<dbReference type="HAMAP" id="MF_00291_B">
    <property type="entry name" value="Ribosomal_uS2_B"/>
    <property type="match status" value="1"/>
</dbReference>
<dbReference type="InterPro" id="IPR001865">
    <property type="entry name" value="Ribosomal_uS2"/>
</dbReference>
<dbReference type="InterPro" id="IPR005706">
    <property type="entry name" value="Ribosomal_uS2_bac/mit/plastid"/>
</dbReference>
<dbReference type="InterPro" id="IPR018130">
    <property type="entry name" value="Ribosomal_uS2_CS"/>
</dbReference>
<dbReference type="InterPro" id="IPR023591">
    <property type="entry name" value="Ribosomal_uS2_flav_dom_sf"/>
</dbReference>
<dbReference type="NCBIfam" id="TIGR01011">
    <property type="entry name" value="rpsB_bact"/>
    <property type="match status" value="1"/>
</dbReference>
<dbReference type="PANTHER" id="PTHR12534">
    <property type="entry name" value="30S RIBOSOMAL PROTEIN S2 PROKARYOTIC AND ORGANELLAR"/>
    <property type="match status" value="1"/>
</dbReference>
<dbReference type="PANTHER" id="PTHR12534:SF0">
    <property type="entry name" value="SMALL RIBOSOMAL SUBUNIT PROTEIN US2M"/>
    <property type="match status" value="1"/>
</dbReference>
<dbReference type="Pfam" id="PF00318">
    <property type="entry name" value="Ribosomal_S2"/>
    <property type="match status" value="1"/>
</dbReference>
<dbReference type="PRINTS" id="PR00395">
    <property type="entry name" value="RIBOSOMALS2"/>
</dbReference>
<dbReference type="SUPFAM" id="SSF52313">
    <property type="entry name" value="Ribosomal protein S2"/>
    <property type="match status" value="1"/>
</dbReference>
<dbReference type="PROSITE" id="PS00962">
    <property type="entry name" value="RIBOSOMAL_S2_1"/>
    <property type="match status" value="1"/>
</dbReference>
<dbReference type="PROSITE" id="PS00963">
    <property type="entry name" value="RIBOSOMAL_S2_2"/>
    <property type="match status" value="1"/>
</dbReference>
<comment type="similarity">
    <text evidence="1">Belongs to the universal ribosomal protein uS2 family.</text>
</comment>
<name>RS2_ROSDO</name>
<feature type="chain" id="PRO_1000004057" description="Small ribosomal subunit protein uS2">
    <location>
        <begin position="1"/>
        <end position="260"/>
    </location>
</feature>
<protein>
    <recommendedName>
        <fullName evidence="1">Small ribosomal subunit protein uS2</fullName>
    </recommendedName>
    <alternativeName>
        <fullName evidence="2">30S ribosomal protein S2</fullName>
    </alternativeName>
</protein>
<proteinExistence type="inferred from homology"/>
<organism>
    <name type="scientific">Roseobacter denitrificans (strain ATCC 33942 / OCh 114)</name>
    <name type="common">Erythrobacter sp. (strain OCh 114)</name>
    <name type="synonym">Roseobacter denitrificans</name>
    <dbReference type="NCBI Taxonomy" id="375451"/>
    <lineage>
        <taxon>Bacteria</taxon>
        <taxon>Pseudomonadati</taxon>
        <taxon>Pseudomonadota</taxon>
        <taxon>Alphaproteobacteria</taxon>
        <taxon>Rhodobacterales</taxon>
        <taxon>Roseobacteraceae</taxon>
        <taxon>Roseobacter</taxon>
    </lineage>
</organism>